<dbReference type="EC" id="4.4.1.21" evidence="1"/>
<dbReference type="EMBL" id="AP008971">
    <property type="protein sequence ID" value="BAG08134.1"/>
    <property type="molecule type" value="Genomic_DNA"/>
</dbReference>
<dbReference type="RefSeq" id="WP_002841719.1">
    <property type="nucleotide sequence ID" value="NC_010376.1"/>
</dbReference>
<dbReference type="SMR" id="B0S194"/>
<dbReference type="STRING" id="334413.FMG_0716"/>
<dbReference type="KEGG" id="fma:FMG_0716"/>
<dbReference type="eggNOG" id="COG1854">
    <property type="taxonomic scope" value="Bacteria"/>
</dbReference>
<dbReference type="HOGENOM" id="CLU_107531_1_0_9"/>
<dbReference type="Proteomes" id="UP000001319">
    <property type="component" value="Chromosome"/>
</dbReference>
<dbReference type="GO" id="GO:0005506">
    <property type="term" value="F:iron ion binding"/>
    <property type="evidence" value="ECO:0007669"/>
    <property type="project" value="InterPro"/>
</dbReference>
<dbReference type="GO" id="GO:0043768">
    <property type="term" value="F:S-ribosylhomocysteine lyase activity"/>
    <property type="evidence" value="ECO:0007669"/>
    <property type="project" value="UniProtKB-UniRule"/>
</dbReference>
<dbReference type="GO" id="GO:0009372">
    <property type="term" value="P:quorum sensing"/>
    <property type="evidence" value="ECO:0007669"/>
    <property type="project" value="UniProtKB-UniRule"/>
</dbReference>
<dbReference type="Gene3D" id="3.30.1360.80">
    <property type="entry name" value="S-ribosylhomocysteinase (LuxS)"/>
    <property type="match status" value="1"/>
</dbReference>
<dbReference type="HAMAP" id="MF_00091">
    <property type="entry name" value="LuxS"/>
    <property type="match status" value="1"/>
</dbReference>
<dbReference type="InterPro" id="IPR037005">
    <property type="entry name" value="LuxS_sf"/>
</dbReference>
<dbReference type="InterPro" id="IPR011249">
    <property type="entry name" value="Metalloenz_LuxS/M16"/>
</dbReference>
<dbReference type="InterPro" id="IPR003815">
    <property type="entry name" value="S-ribosylhomocysteinase"/>
</dbReference>
<dbReference type="NCBIfam" id="NF002604">
    <property type="entry name" value="PRK02260.1-4"/>
    <property type="match status" value="1"/>
</dbReference>
<dbReference type="PANTHER" id="PTHR35799">
    <property type="entry name" value="S-RIBOSYLHOMOCYSTEINE LYASE"/>
    <property type="match status" value="1"/>
</dbReference>
<dbReference type="PANTHER" id="PTHR35799:SF1">
    <property type="entry name" value="S-RIBOSYLHOMOCYSTEINE LYASE"/>
    <property type="match status" value="1"/>
</dbReference>
<dbReference type="Pfam" id="PF02664">
    <property type="entry name" value="LuxS"/>
    <property type="match status" value="1"/>
</dbReference>
<dbReference type="PIRSF" id="PIRSF006160">
    <property type="entry name" value="AI2"/>
    <property type="match status" value="1"/>
</dbReference>
<dbReference type="PRINTS" id="PR01487">
    <property type="entry name" value="LUXSPROTEIN"/>
</dbReference>
<dbReference type="SUPFAM" id="SSF63411">
    <property type="entry name" value="LuxS/MPP-like metallohydrolase"/>
    <property type="match status" value="1"/>
</dbReference>
<evidence type="ECO:0000255" key="1">
    <source>
        <dbReference type="HAMAP-Rule" id="MF_00091"/>
    </source>
</evidence>
<comment type="function">
    <text evidence="1">Involved in the synthesis of autoinducer 2 (AI-2) which is secreted by bacteria and is used to communicate both the cell density and the metabolic potential of the environment. The regulation of gene expression in response to changes in cell density is called quorum sensing. Catalyzes the transformation of S-ribosylhomocysteine (RHC) to homocysteine (HC) and 4,5-dihydroxy-2,3-pentadione (DPD).</text>
</comment>
<comment type="catalytic activity">
    <reaction evidence="1">
        <text>S-(5-deoxy-D-ribos-5-yl)-L-homocysteine = (S)-4,5-dihydroxypentane-2,3-dione + L-homocysteine</text>
        <dbReference type="Rhea" id="RHEA:17753"/>
        <dbReference type="ChEBI" id="CHEBI:29484"/>
        <dbReference type="ChEBI" id="CHEBI:58195"/>
        <dbReference type="ChEBI" id="CHEBI:58199"/>
        <dbReference type="EC" id="4.4.1.21"/>
    </reaction>
</comment>
<comment type="cofactor">
    <cofactor evidence="1">
        <name>Fe cation</name>
        <dbReference type="ChEBI" id="CHEBI:24875"/>
    </cofactor>
    <text evidence="1">Binds 1 Fe cation per subunit.</text>
</comment>
<comment type="subunit">
    <text evidence="1">Homodimer.</text>
</comment>
<comment type="similarity">
    <text evidence="1">Belongs to the LuxS family.</text>
</comment>
<name>LUXS_FINM2</name>
<proteinExistence type="inferred from homology"/>
<gene>
    <name evidence="1" type="primary">luxS</name>
    <name type="ordered locus">FMG_0716</name>
</gene>
<accession>B0S194</accession>
<reference key="1">
    <citation type="journal article" date="2008" name="DNA Res.">
        <title>Complete genome sequence of Finegoldia magna, an anaerobic opportunistic pathogen.</title>
        <authorList>
            <person name="Goto T."/>
            <person name="Yamashita A."/>
            <person name="Hirakawa H."/>
            <person name="Matsutani M."/>
            <person name="Todo K."/>
            <person name="Ohshima K."/>
            <person name="Toh H."/>
            <person name="Miyamoto K."/>
            <person name="Kuhara S."/>
            <person name="Hattori M."/>
            <person name="Shimizu T."/>
            <person name="Akimoto S."/>
        </authorList>
    </citation>
    <scope>NUCLEOTIDE SEQUENCE [LARGE SCALE GENOMIC DNA]</scope>
    <source>
        <strain>ATCC 29328 / DSM 20472 / WAL 2508</strain>
    </source>
</reference>
<keyword id="KW-0071">Autoinducer synthesis</keyword>
<keyword id="KW-0408">Iron</keyword>
<keyword id="KW-0456">Lyase</keyword>
<keyword id="KW-0479">Metal-binding</keyword>
<keyword id="KW-0673">Quorum sensing</keyword>
<keyword id="KW-1185">Reference proteome</keyword>
<sequence>MNKIESFKINHLKLMPGIYVSRKDYLGNEVLTTFDLRITAPNREPVMNTAEVHAIEHLGATFLRNKLENEVIYFGPMGCRTGFYLILVGDKKSEDIVDLIKELFEFISNYEGEIPGQSAKDCGNYSDMNLSMAKFYSNKYLNVINNIKKENLIYPE</sequence>
<feature type="chain" id="PRO_1000093308" description="S-ribosylhomocysteine lyase">
    <location>
        <begin position="1"/>
        <end position="156"/>
    </location>
</feature>
<feature type="binding site" evidence="1">
    <location>
        <position position="53"/>
    </location>
    <ligand>
        <name>Fe cation</name>
        <dbReference type="ChEBI" id="CHEBI:24875"/>
    </ligand>
</feature>
<feature type="binding site" evidence="1">
    <location>
        <position position="57"/>
    </location>
    <ligand>
        <name>Fe cation</name>
        <dbReference type="ChEBI" id="CHEBI:24875"/>
    </ligand>
</feature>
<feature type="binding site" evidence="1">
    <location>
        <position position="122"/>
    </location>
    <ligand>
        <name>Fe cation</name>
        <dbReference type="ChEBI" id="CHEBI:24875"/>
    </ligand>
</feature>
<organism>
    <name type="scientific">Finegoldia magna (strain ATCC 29328 / DSM 20472 / WAL 2508)</name>
    <name type="common">Peptostreptococcus magnus</name>
    <dbReference type="NCBI Taxonomy" id="334413"/>
    <lineage>
        <taxon>Bacteria</taxon>
        <taxon>Bacillati</taxon>
        <taxon>Bacillota</taxon>
        <taxon>Tissierellia</taxon>
        <taxon>Tissierellales</taxon>
        <taxon>Peptoniphilaceae</taxon>
        <taxon>Finegoldia</taxon>
    </lineage>
</organism>
<protein>
    <recommendedName>
        <fullName evidence="1">S-ribosylhomocysteine lyase</fullName>
        <ecNumber evidence="1">4.4.1.21</ecNumber>
    </recommendedName>
    <alternativeName>
        <fullName evidence="1">AI-2 synthesis protein</fullName>
    </alternativeName>
    <alternativeName>
        <fullName evidence="1">Autoinducer-2 production protein LuxS</fullName>
    </alternativeName>
</protein>